<reference key="1">
    <citation type="submission" date="2007-09" db="EMBL/GenBank/DDBJ databases">
        <title>Complete genome sequence of Rickettsia akari.</title>
        <authorList>
            <person name="Madan A."/>
            <person name="Fahey J."/>
            <person name="Helton E."/>
            <person name="Ketteman M."/>
            <person name="Madan A."/>
            <person name="Rodrigues S."/>
            <person name="Sanchez A."/>
            <person name="Whiting M."/>
            <person name="Dasch G."/>
            <person name="Eremeeva M."/>
        </authorList>
    </citation>
    <scope>NUCLEOTIDE SEQUENCE [LARGE SCALE GENOMIC DNA]</scope>
    <source>
        <strain>Hartford</strain>
    </source>
</reference>
<proteinExistence type="inferred from homology"/>
<comment type="function">
    <text evidence="1">Binds 23S rRNA and is also seen to make contacts with the A and possibly P site tRNAs.</text>
</comment>
<comment type="subunit">
    <text evidence="1">Part of the 50S ribosomal subunit.</text>
</comment>
<comment type="similarity">
    <text evidence="1">Belongs to the universal ribosomal protein uL16 family.</text>
</comment>
<accession>A8GPE3</accession>
<protein>
    <recommendedName>
        <fullName evidence="1">Large ribosomal subunit protein uL16</fullName>
    </recommendedName>
    <alternativeName>
        <fullName evidence="2">50S ribosomal protein L16</fullName>
    </alternativeName>
</protein>
<keyword id="KW-0687">Ribonucleoprotein</keyword>
<keyword id="KW-0689">Ribosomal protein</keyword>
<keyword id="KW-0694">RNA-binding</keyword>
<keyword id="KW-0699">rRNA-binding</keyword>
<keyword id="KW-0820">tRNA-binding</keyword>
<feature type="chain" id="PRO_1000054691" description="Large ribosomal subunit protein uL16">
    <location>
        <begin position="1"/>
        <end position="136"/>
    </location>
</feature>
<organism>
    <name type="scientific">Rickettsia akari (strain Hartford)</name>
    <dbReference type="NCBI Taxonomy" id="293614"/>
    <lineage>
        <taxon>Bacteria</taxon>
        <taxon>Pseudomonadati</taxon>
        <taxon>Pseudomonadota</taxon>
        <taxon>Alphaproteobacteria</taxon>
        <taxon>Rickettsiales</taxon>
        <taxon>Rickettsiaceae</taxon>
        <taxon>Rickettsieae</taxon>
        <taxon>Rickettsia</taxon>
        <taxon>spotted fever group</taxon>
    </lineage>
</organism>
<dbReference type="EMBL" id="CP000847">
    <property type="protein sequence ID" value="ABV75268.1"/>
    <property type="molecule type" value="Genomic_DNA"/>
</dbReference>
<dbReference type="RefSeq" id="WP_012149898.1">
    <property type="nucleotide sequence ID" value="NC_009881.1"/>
</dbReference>
<dbReference type="SMR" id="A8GPE3"/>
<dbReference type="STRING" id="293614.A1C_05070"/>
<dbReference type="KEGG" id="rak:A1C_05070"/>
<dbReference type="eggNOG" id="COG0197">
    <property type="taxonomic scope" value="Bacteria"/>
</dbReference>
<dbReference type="HOGENOM" id="CLU_078858_2_1_5"/>
<dbReference type="Proteomes" id="UP000006830">
    <property type="component" value="Chromosome"/>
</dbReference>
<dbReference type="GO" id="GO:0022625">
    <property type="term" value="C:cytosolic large ribosomal subunit"/>
    <property type="evidence" value="ECO:0007669"/>
    <property type="project" value="TreeGrafter"/>
</dbReference>
<dbReference type="GO" id="GO:0019843">
    <property type="term" value="F:rRNA binding"/>
    <property type="evidence" value="ECO:0007669"/>
    <property type="project" value="UniProtKB-UniRule"/>
</dbReference>
<dbReference type="GO" id="GO:0003735">
    <property type="term" value="F:structural constituent of ribosome"/>
    <property type="evidence" value="ECO:0007669"/>
    <property type="project" value="InterPro"/>
</dbReference>
<dbReference type="GO" id="GO:0000049">
    <property type="term" value="F:tRNA binding"/>
    <property type="evidence" value="ECO:0007669"/>
    <property type="project" value="UniProtKB-KW"/>
</dbReference>
<dbReference type="GO" id="GO:0006412">
    <property type="term" value="P:translation"/>
    <property type="evidence" value="ECO:0007669"/>
    <property type="project" value="UniProtKB-UniRule"/>
</dbReference>
<dbReference type="CDD" id="cd01433">
    <property type="entry name" value="Ribosomal_L16_L10e"/>
    <property type="match status" value="1"/>
</dbReference>
<dbReference type="FunFam" id="3.90.1170.10:FF:000001">
    <property type="entry name" value="50S ribosomal protein L16"/>
    <property type="match status" value="1"/>
</dbReference>
<dbReference type="Gene3D" id="3.90.1170.10">
    <property type="entry name" value="Ribosomal protein L10e/L16"/>
    <property type="match status" value="1"/>
</dbReference>
<dbReference type="HAMAP" id="MF_01342">
    <property type="entry name" value="Ribosomal_uL16"/>
    <property type="match status" value="1"/>
</dbReference>
<dbReference type="InterPro" id="IPR047873">
    <property type="entry name" value="Ribosomal_uL16"/>
</dbReference>
<dbReference type="InterPro" id="IPR000114">
    <property type="entry name" value="Ribosomal_uL16_bact-type"/>
</dbReference>
<dbReference type="InterPro" id="IPR020798">
    <property type="entry name" value="Ribosomal_uL16_CS"/>
</dbReference>
<dbReference type="InterPro" id="IPR016180">
    <property type="entry name" value="Ribosomal_uL16_dom"/>
</dbReference>
<dbReference type="InterPro" id="IPR036920">
    <property type="entry name" value="Ribosomal_uL16_sf"/>
</dbReference>
<dbReference type="NCBIfam" id="TIGR01164">
    <property type="entry name" value="rplP_bact"/>
    <property type="match status" value="1"/>
</dbReference>
<dbReference type="PANTHER" id="PTHR12220">
    <property type="entry name" value="50S/60S RIBOSOMAL PROTEIN L16"/>
    <property type="match status" value="1"/>
</dbReference>
<dbReference type="PANTHER" id="PTHR12220:SF13">
    <property type="entry name" value="LARGE RIBOSOMAL SUBUNIT PROTEIN UL16M"/>
    <property type="match status" value="1"/>
</dbReference>
<dbReference type="Pfam" id="PF00252">
    <property type="entry name" value="Ribosomal_L16"/>
    <property type="match status" value="1"/>
</dbReference>
<dbReference type="PRINTS" id="PR00060">
    <property type="entry name" value="RIBOSOMALL16"/>
</dbReference>
<dbReference type="SUPFAM" id="SSF54686">
    <property type="entry name" value="Ribosomal protein L16p/L10e"/>
    <property type="match status" value="1"/>
</dbReference>
<dbReference type="PROSITE" id="PS00586">
    <property type="entry name" value="RIBOSOMAL_L16_1"/>
    <property type="match status" value="1"/>
</dbReference>
<dbReference type="PROSITE" id="PS00701">
    <property type="entry name" value="RIBOSOMAL_L16_2"/>
    <property type="match status" value="1"/>
</dbReference>
<sequence length="136" mass="15238">MLAPKKQKFRKAHKGRVASKAKAGTMLAFGSFGLKSIDGWRVTARQIEAGRKAATRCMKRQGRLWIRIFPDVPVSKKPAEVRMGKGKGSPEFFAVRVSPGKIMFEIEGVEENIALRALELASAKLPVRTRIVRRYE</sequence>
<name>RL16_RICAH</name>
<gene>
    <name evidence="1" type="primary">rplP</name>
    <name type="ordered locus">A1C_05070</name>
</gene>
<evidence type="ECO:0000255" key="1">
    <source>
        <dbReference type="HAMAP-Rule" id="MF_01342"/>
    </source>
</evidence>
<evidence type="ECO:0000305" key="2"/>